<sequence>MRCPFCAHDDSQVKDSRPTDDGAAIRRRRQCEGCGARFTTFERIQLREMTVVKSDGRREVFDRSKLERSISVACRKRPVDPARIERLATAIQRQIETSGDSEIPAASVGGMVMDGLKALDSVAYIRFASVYKDFREAKDFEDFAGAVSEAGRDG</sequence>
<keyword id="KW-0067">ATP-binding</keyword>
<keyword id="KW-0238">DNA-binding</keyword>
<keyword id="KW-0479">Metal-binding</keyword>
<keyword id="KW-0547">Nucleotide-binding</keyword>
<keyword id="KW-1185">Reference proteome</keyword>
<keyword id="KW-0678">Repressor</keyword>
<keyword id="KW-0804">Transcription</keyword>
<keyword id="KW-0805">Transcription regulation</keyword>
<keyword id="KW-0862">Zinc</keyword>
<keyword id="KW-0863">Zinc-finger</keyword>
<reference key="1">
    <citation type="journal article" date="2010" name="J. Bacteriol.">
        <title>Genome sequence of the dioxin-mineralizing bacterium Sphingomonas wittichii RW1.</title>
        <authorList>
            <person name="Miller T.R."/>
            <person name="Delcher A.L."/>
            <person name="Salzberg S.L."/>
            <person name="Saunders E."/>
            <person name="Detter J.C."/>
            <person name="Halden R.U."/>
        </authorList>
    </citation>
    <scope>NUCLEOTIDE SEQUENCE [LARGE SCALE GENOMIC DNA]</scope>
    <source>
        <strain>DSM 6014 / CCUG 31198 / JCM 15750 / NBRC 105917 / EY 4224 / RW1</strain>
    </source>
</reference>
<accession>A5V5D2</accession>
<organism>
    <name type="scientific">Rhizorhabdus wittichii (strain DSM 6014 / CCUG 31198 / JCM 15750 / NBRC 105917 / EY 4224 / RW1)</name>
    <name type="common">Sphingomonas wittichii</name>
    <dbReference type="NCBI Taxonomy" id="392499"/>
    <lineage>
        <taxon>Bacteria</taxon>
        <taxon>Pseudomonadati</taxon>
        <taxon>Pseudomonadota</taxon>
        <taxon>Alphaproteobacteria</taxon>
        <taxon>Sphingomonadales</taxon>
        <taxon>Sphingomonadaceae</taxon>
        <taxon>Rhizorhabdus</taxon>
    </lineage>
</organism>
<gene>
    <name evidence="1" type="primary">nrdR</name>
    <name type="ordered locus">Swit_1132</name>
</gene>
<protein>
    <recommendedName>
        <fullName evidence="1">Transcriptional repressor NrdR</fullName>
    </recommendedName>
</protein>
<name>NRDR_RHIWR</name>
<proteinExistence type="inferred from homology"/>
<dbReference type="EMBL" id="CP000699">
    <property type="protein sequence ID" value="ABQ67498.1"/>
    <property type="molecule type" value="Genomic_DNA"/>
</dbReference>
<dbReference type="SMR" id="A5V5D2"/>
<dbReference type="STRING" id="392499.Swit_1132"/>
<dbReference type="PaxDb" id="392499-Swit_1132"/>
<dbReference type="KEGG" id="swi:Swit_1132"/>
<dbReference type="eggNOG" id="COG1327">
    <property type="taxonomic scope" value="Bacteria"/>
</dbReference>
<dbReference type="HOGENOM" id="CLU_108412_0_0_5"/>
<dbReference type="OrthoDB" id="9807461at2"/>
<dbReference type="Proteomes" id="UP000001989">
    <property type="component" value="Chromosome"/>
</dbReference>
<dbReference type="GO" id="GO:0005524">
    <property type="term" value="F:ATP binding"/>
    <property type="evidence" value="ECO:0007669"/>
    <property type="project" value="UniProtKB-KW"/>
</dbReference>
<dbReference type="GO" id="GO:0003677">
    <property type="term" value="F:DNA binding"/>
    <property type="evidence" value="ECO:0007669"/>
    <property type="project" value="UniProtKB-KW"/>
</dbReference>
<dbReference type="GO" id="GO:0008270">
    <property type="term" value="F:zinc ion binding"/>
    <property type="evidence" value="ECO:0007669"/>
    <property type="project" value="UniProtKB-UniRule"/>
</dbReference>
<dbReference type="GO" id="GO:0045892">
    <property type="term" value="P:negative regulation of DNA-templated transcription"/>
    <property type="evidence" value="ECO:0007669"/>
    <property type="project" value="UniProtKB-UniRule"/>
</dbReference>
<dbReference type="HAMAP" id="MF_00440">
    <property type="entry name" value="NrdR"/>
    <property type="match status" value="1"/>
</dbReference>
<dbReference type="InterPro" id="IPR005144">
    <property type="entry name" value="ATP-cone_dom"/>
</dbReference>
<dbReference type="InterPro" id="IPR055173">
    <property type="entry name" value="NrdR-like_N"/>
</dbReference>
<dbReference type="InterPro" id="IPR003796">
    <property type="entry name" value="RNR_NrdR-like"/>
</dbReference>
<dbReference type="NCBIfam" id="TIGR00244">
    <property type="entry name" value="transcriptional regulator NrdR"/>
    <property type="match status" value="1"/>
</dbReference>
<dbReference type="PANTHER" id="PTHR30455">
    <property type="entry name" value="TRANSCRIPTIONAL REPRESSOR NRDR"/>
    <property type="match status" value="1"/>
</dbReference>
<dbReference type="PANTHER" id="PTHR30455:SF2">
    <property type="entry name" value="TRANSCRIPTIONAL REPRESSOR NRDR"/>
    <property type="match status" value="1"/>
</dbReference>
<dbReference type="Pfam" id="PF03477">
    <property type="entry name" value="ATP-cone"/>
    <property type="match status" value="1"/>
</dbReference>
<dbReference type="Pfam" id="PF22811">
    <property type="entry name" value="Zn_ribbon_NrdR"/>
    <property type="match status" value="1"/>
</dbReference>
<dbReference type="PROSITE" id="PS51161">
    <property type="entry name" value="ATP_CONE"/>
    <property type="match status" value="1"/>
</dbReference>
<comment type="function">
    <text evidence="1">Negatively regulates transcription of bacterial ribonucleotide reductase nrd genes and operons by binding to NrdR-boxes.</text>
</comment>
<comment type="cofactor">
    <cofactor evidence="1">
        <name>Zn(2+)</name>
        <dbReference type="ChEBI" id="CHEBI:29105"/>
    </cofactor>
    <text evidence="1">Binds 1 zinc ion.</text>
</comment>
<comment type="similarity">
    <text evidence="1">Belongs to the NrdR family.</text>
</comment>
<feature type="chain" id="PRO_1000080836" description="Transcriptional repressor NrdR">
    <location>
        <begin position="1"/>
        <end position="154"/>
    </location>
</feature>
<feature type="domain" description="ATP-cone" evidence="1">
    <location>
        <begin position="49"/>
        <end position="139"/>
    </location>
</feature>
<feature type="zinc finger region" evidence="1">
    <location>
        <begin position="3"/>
        <end position="34"/>
    </location>
</feature>
<feature type="region of interest" description="Disordered" evidence="2">
    <location>
        <begin position="1"/>
        <end position="22"/>
    </location>
</feature>
<feature type="compositionally biased region" description="Basic and acidic residues" evidence="2">
    <location>
        <begin position="7"/>
        <end position="22"/>
    </location>
</feature>
<evidence type="ECO:0000255" key="1">
    <source>
        <dbReference type="HAMAP-Rule" id="MF_00440"/>
    </source>
</evidence>
<evidence type="ECO:0000256" key="2">
    <source>
        <dbReference type="SAM" id="MobiDB-lite"/>
    </source>
</evidence>